<dbReference type="EC" id="6.2.1.12" evidence="3 4"/>
<dbReference type="EC" id="6.2.1.34" evidence="3 4"/>
<dbReference type="EMBL" id="AP004558">
    <property type="protein sequence ID" value="BAD09442.1"/>
    <property type="molecule type" value="Genomic_DNA"/>
</dbReference>
<dbReference type="EMBL" id="AP004665">
    <property type="protein sequence ID" value="BAD09825.1"/>
    <property type="molecule type" value="Genomic_DNA"/>
</dbReference>
<dbReference type="EMBL" id="AP008214">
    <property type="protein sequence ID" value="BAF23849.1"/>
    <property type="molecule type" value="Genomic_DNA"/>
</dbReference>
<dbReference type="EMBL" id="AP014964">
    <property type="protein sequence ID" value="BAT05682.1"/>
    <property type="molecule type" value="Genomic_DNA"/>
</dbReference>
<dbReference type="EMBL" id="CM000145">
    <property type="protein sequence ID" value="EAZ42922.1"/>
    <property type="molecule type" value="Genomic_DNA"/>
</dbReference>
<dbReference type="EMBL" id="AK120964">
    <property type="status" value="NOT_ANNOTATED_CDS"/>
    <property type="molecule type" value="mRNA"/>
</dbReference>
<dbReference type="RefSeq" id="XP_015650830.1">
    <property type="nucleotide sequence ID" value="XM_015795344.1"/>
</dbReference>
<dbReference type="SMR" id="Q6ZAC1"/>
<dbReference type="FunCoup" id="Q6ZAC1">
    <property type="interactions" value="1395"/>
</dbReference>
<dbReference type="STRING" id="39947.Q6ZAC1"/>
<dbReference type="PaxDb" id="39947-Q6ZAC1"/>
<dbReference type="EnsemblPlants" id="Os08t0448000-01">
    <property type="protein sequence ID" value="Os08t0448000-01"/>
    <property type="gene ID" value="Os08g0448000"/>
</dbReference>
<dbReference type="Gramene" id="Os08t0448000-01">
    <property type="protein sequence ID" value="Os08t0448000-01"/>
    <property type="gene ID" value="Os08g0448000"/>
</dbReference>
<dbReference type="KEGG" id="dosa:Os08g0448000"/>
<dbReference type="eggNOG" id="KOG1176">
    <property type="taxonomic scope" value="Eukaryota"/>
</dbReference>
<dbReference type="HOGENOM" id="CLU_000022_59_2_1"/>
<dbReference type="InParanoid" id="Q6ZAC1"/>
<dbReference type="OMA" id="FYNCFGQ"/>
<dbReference type="OrthoDB" id="10253869at2759"/>
<dbReference type="BRENDA" id="6.2.1.12">
    <property type="organism ID" value="4460"/>
</dbReference>
<dbReference type="PlantReactome" id="R-OSA-1119316">
    <property type="pathway name" value="Phenylpropanoid biosynthesis"/>
</dbReference>
<dbReference type="PlantReactome" id="R-OSA-1119531">
    <property type="pathway name" value="Flavonoid biosynthesis"/>
</dbReference>
<dbReference type="UniPathway" id="UPA00372">
    <property type="reaction ID" value="UER00547"/>
</dbReference>
<dbReference type="Proteomes" id="UP000000763">
    <property type="component" value="Chromosome 8"/>
</dbReference>
<dbReference type="Proteomes" id="UP000007752">
    <property type="component" value="Chromosome 8"/>
</dbReference>
<dbReference type="Proteomes" id="UP000059680">
    <property type="component" value="Chromosome 8"/>
</dbReference>
<dbReference type="GO" id="GO:0106286">
    <property type="term" value="F:(E)-caffeate-CoA ligase activity"/>
    <property type="evidence" value="ECO:0007669"/>
    <property type="project" value="RHEA"/>
</dbReference>
<dbReference type="GO" id="GO:0016207">
    <property type="term" value="F:4-coumarate-CoA ligase activity"/>
    <property type="evidence" value="ECO:0000314"/>
    <property type="project" value="UniProtKB"/>
</dbReference>
<dbReference type="GO" id="GO:0005524">
    <property type="term" value="F:ATP binding"/>
    <property type="evidence" value="ECO:0007669"/>
    <property type="project" value="UniProtKB-KW"/>
</dbReference>
<dbReference type="GO" id="GO:0016405">
    <property type="term" value="F:CoA-ligase activity"/>
    <property type="evidence" value="ECO:0000318"/>
    <property type="project" value="GO_Central"/>
</dbReference>
<dbReference type="GO" id="GO:0106290">
    <property type="term" value="F:trans-cinnamate-CoA ligase activity"/>
    <property type="evidence" value="ECO:0000314"/>
    <property type="project" value="UniProtKB"/>
</dbReference>
<dbReference type="GO" id="GO:0050563">
    <property type="term" value="F:trans-feruloyl-CoA synthase activity"/>
    <property type="evidence" value="ECO:0007669"/>
    <property type="project" value="RHEA"/>
</dbReference>
<dbReference type="GO" id="GO:0009698">
    <property type="term" value="P:phenylpropanoid metabolic process"/>
    <property type="evidence" value="ECO:0000314"/>
    <property type="project" value="UniProtKB"/>
</dbReference>
<dbReference type="CDD" id="cd05904">
    <property type="entry name" value="4CL"/>
    <property type="match status" value="1"/>
</dbReference>
<dbReference type="FunFam" id="3.30.300.30:FF:000007">
    <property type="entry name" value="4-coumarate--CoA ligase 2"/>
    <property type="match status" value="1"/>
</dbReference>
<dbReference type="FunFam" id="3.40.50.12780:FF:000003">
    <property type="entry name" value="Long-chain-fatty-acid--CoA ligase FadD"/>
    <property type="match status" value="1"/>
</dbReference>
<dbReference type="Gene3D" id="3.30.300.30">
    <property type="match status" value="1"/>
</dbReference>
<dbReference type="Gene3D" id="3.40.50.12780">
    <property type="entry name" value="N-terminal domain of ligase-like"/>
    <property type="match status" value="1"/>
</dbReference>
<dbReference type="InterPro" id="IPR025110">
    <property type="entry name" value="AMP-bd_C"/>
</dbReference>
<dbReference type="InterPro" id="IPR045851">
    <property type="entry name" value="AMP-bd_C_sf"/>
</dbReference>
<dbReference type="InterPro" id="IPR020845">
    <property type="entry name" value="AMP-binding_CS"/>
</dbReference>
<dbReference type="InterPro" id="IPR000873">
    <property type="entry name" value="AMP-dep_synth/lig_dom"/>
</dbReference>
<dbReference type="InterPro" id="IPR042099">
    <property type="entry name" value="ANL_N_sf"/>
</dbReference>
<dbReference type="PANTHER" id="PTHR24096:SF406">
    <property type="entry name" value="4-COUMARATE--COA LIGASE 2"/>
    <property type="match status" value="1"/>
</dbReference>
<dbReference type="PANTHER" id="PTHR24096">
    <property type="entry name" value="LONG-CHAIN-FATTY-ACID--COA LIGASE"/>
    <property type="match status" value="1"/>
</dbReference>
<dbReference type="Pfam" id="PF00501">
    <property type="entry name" value="AMP-binding"/>
    <property type="match status" value="1"/>
</dbReference>
<dbReference type="Pfam" id="PF13193">
    <property type="entry name" value="AMP-binding_C"/>
    <property type="match status" value="1"/>
</dbReference>
<dbReference type="SUPFAM" id="SSF56801">
    <property type="entry name" value="Acetyl-CoA synthetase-like"/>
    <property type="match status" value="1"/>
</dbReference>
<dbReference type="PROSITE" id="PS00455">
    <property type="entry name" value="AMP_BINDING"/>
    <property type="match status" value="1"/>
</dbReference>
<keyword id="KW-0067">ATP-binding</keyword>
<keyword id="KW-0436">Ligase</keyword>
<keyword id="KW-0460">Magnesium</keyword>
<keyword id="KW-0547">Nucleotide-binding</keyword>
<keyword id="KW-0587">Phenylpropanoid metabolism</keyword>
<keyword id="KW-1185">Reference proteome</keyword>
<gene>
    <name evidence="6" type="primary">4CL5</name>
    <name evidence="12" type="ordered locus">Os08g0448000</name>
    <name evidence="7" type="ordered locus">LOC_Os08g34790</name>
    <name evidence="13" type="ORF">OsJ_026405</name>
    <name evidence="10" type="ORF">P0409A07.17</name>
    <name evidence="11" type="ORF">P0429B05.38</name>
</gene>
<accession>Q6ZAC1</accession>
<accession>A0A0N7KPY1</accession>
<evidence type="ECO:0000250" key="1">
    <source>
        <dbReference type="UniProtKB" id="O24146"/>
    </source>
</evidence>
<evidence type="ECO:0000250" key="2">
    <source>
        <dbReference type="UniProtKB" id="Q42524"/>
    </source>
</evidence>
<evidence type="ECO:0000269" key="3">
    <source>
    </source>
</evidence>
<evidence type="ECO:0000269" key="4">
    <source>
    </source>
</evidence>
<evidence type="ECO:0000269" key="5">
    <source>
    </source>
</evidence>
<evidence type="ECO:0000303" key="6">
    <source>
    </source>
</evidence>
<evidence type="ECO:0000305" key="7"/>
<evidence type="ECO:0000305" key="8">
    <source>
    </source>
</evidence>
<evidence type="ECO:0000305" key="9">
    <source>
    </source>
</evidence>
<evidence type="ECO:0000312" key="10">
    <source>
        <dbReference type="EMBL" id="BAD09442.1"/>
    </source>
</evidence>
<evidence type="ECO:0000312" key="11">
    <source>
        <dbReference type="EMBL" id="BAD09825.1"/>
    </source>
</evidence>
<evidence type="ECO:0000312" key="12">
    <source>
        <dbReference type="EMBL" id="BAT05682.1"/>
    </source>
</evidence>
<evidence type="ECO:0000312" key="13">
    <source>
        <dbReference type="EMBL" id="EAZ42922.1"/>
    </source>
</evidence>
<feature type="chain" id="PRO_0000351626" description="4-coumarate--CoA ligase 5">
    <location>
        <begin position="1"/>
        <end position="539"/>
    </location>
</feature>
<feature type="region of interest" description="SBD1" evidence="2">
    <location>
        <begin position="258"/>
        <end position="327"/>
    </location>
</feature>
<feature type="region of interest" description="SBD2" evidence="2">
    <location>
        <begin position="328"/>
        <end position="395"/>
    </location>
</feature>
<feature type="binding site" evidence="1">
    <location>
        <position position="185"/>
    </location>
    <ligand>
        <name>ATP</name>
        <dbReference type="ChEBI" id="CHEBI:30616"/>
    </ligand>
</feature>
<feature type="binding site" evidence="1">
    <location>
        <position position="186"/>
    </location>
    <ligand>
        <name>ATP</name>
        <dbReference type="ChEBI" id="CHEBI:30616"/>
    </ligand>
</feature>
<feature type="binding site" evidence="1">
    <location>
        <position position="187"/>
    </location>
    <ligand>
        <name>ATP</name>
        <dbReference type="ChEBI" id="CHEBI:30616"/>
    </ligand>
</feature>
<feature type="binding site" evidence="1">
    <location>
        <position position="188"/>
    </location>
    <ligand>
        <name>ATP</name>
        <dbReference type="ChEBI" id="CHEBI:30616"/>
    </ligand>
</feature>
<feature type="binding site" evidence="1">
    <location>
        <position position="189"/>
    </location>
    <ligand>
        <name>ATP</name>
        <dbReference type="ChEBI" id="CHEBI:30616"/>
    </ligand>
</feature>
<feature type="binding site" evidence="1">
    <location>
        <position position="193"/>
    </location>
    <ligand>
        <name>ATP</name>
        <dbReference type="ChEBI" id="CHEBI:30616"/>
    </ligand>
</feature>
<feature type="binding site" evidence="1">
    <location>
        <position position="235"/>
    </location>
    <ligand>
        <name>(E)-4-coumaroyl-AMP</name>
        <dbReference type="ChEBI" id="CHEBI:192348"/>
    </ligand>
</feature>
<feature type="binding site" evidence="1">
    <location>
        <position position="239"/>
    </location>
    <ligand>
        <name>(E)-4-coumaroyl-AMP</name>
        <dbReference type="ChEBI" id="CHEBI:192348"/>
    </ligand>
</feature>
<feature type="binding site" evidence="1">
    <location>
        <position position="256"/>
    </location>
    <ligand>
        <name>CoA</name>
        <dbReference type="ChEBI" id="CHEBI:57287"/>
    </ligand>
</feature>
<feature type="binding site" evidence="1">
    <location>
        <position position="305"/>
    </location>
    <ligand>
        <name>(E)-4-coumaroyl-AMP</name>
        <dbReference type="ChEBI" id="CHEBI:192348"/>
    </ligand>
</feature>
<feature type="binding site" evidence="1">
    <location>
        <position position="327"/>
    </location>
    <ligand>
        <name>(E)-4-coumaroyl-AMP</name>
        <dbReference type="ChEBI" id="CHEBI:192348"/>
    </ligand>
</feature>
<feature type="binding site" evidence="1">
    <location>
        <position position="327"/>
    </location>
    <ligand>
        <name>ATP</name>
        <dbReference type="ChEBI" id="CHEBI:30616"/>
    </ligand>
</feature>
<feature type="binding site" evidence="1">
    <location>
        <position position="328"/>
    </location>
    <ligand>
        <name>(E)-4-coumaroyl-AMP</name>
        <dbReference type="ChEBI" id="CHEBI:192348"/>
    </ligand>
</feature>
<feature type="binding site" evidence="1">
    <location>
        <position position="328"/>
    </location>
    <ligand>
        <name>ATP</name>
        <dbReference type="ChEBI" id="CHEBI:30616"/>
    </ligand>
</feature>
<feature type="binding site" evidence="1">
    <location>
        <position position="332"/>
    </location>
    <ligand>
        <name>(E)-4-coumaroyl-AMP</name>
        <dbReference type="ChEBI" id="CHEBI:192348"/>
    </ligand>
</feature>
<feature type="binding site" evidence="1">
    <location>
        <position position="332"/>
    </location>
    <ligand>
        <name>ATP</name>
        <dbReference type="ChEBI" id="CHEBI:30616"/>
    </ligand>
</feature>
<feature type="binding site" evidence="1">
    <location>
        <position position="340"/>
    </location>
    <ligand>
        <name>(E)-4-coumaroyl-AMP</name>
        <dbReference type="ChEBI" id="CHEBI:192348"/>
    </ligand>
</feature>
<feature type="binding site" evidence="1">
    <location>
        <position position="416"/>
    </location>
    <ligand>
        <name>ATP</name>
        <dbReference type="ChEBI" id="CHEBI:30616"/>
    </ligand>
</feature>
<feature type="binding site" evidence="1">
    <location>
        <position position="431"/>
    </location>
    <ligand>
        <name>ATP</name>
        <dbReference type="ChEBI" id="CHEBI:30616"/>
    </ligand>
</feature>
<feature type="binding site" evidence="1">
    <location>
        <position position="433"/>
    </location>
    <ligand>
        <name>(E)-4-coumaroyl-AMP</name>
        <dbReference type="ChEBI" id="CHEBI:192348"/>
    </ligand>
</feature>
<feature type="binding site" evidence="1">
    <location>
        <position position="437"/>
    </location>
    <ligand>
        <name>(E)-4-coumaroyl-AMP</name>
        <dbReference type="ChEBI" id="CHEBI:192348"/>
    </ligand>
</feature>
<feature type="binding site" evidence="1">
    <location>
        <position position="439"/>
    </location>
    <ligand>
        <name>CoA</name>
        <dbReference type="ChEBI" id="CHEBI:57287"/>
    </ligand>
</feature>
<feature type="binding site" evidence="1">
    <location>
        <position position="440"/>
    </location>
    <ligand>
        <name>CoA</name>
        <dbReference type="ChEBI" id="CHEBI:57287"/>
    </ligand>
</feature>
<feature type="binding site" evidence="1">
    <location>
        <position position="522"/>
    </location>
    <ligand>
        <name>ATP</name>
        <dbReference type="ChEBI" id="CHEBI:30616"/>
    </ligand>
</feature>
<feature type="sequence conflict" description="In Ref. 5; AK120964." evidence="7" ref="5">
    <original>D</original>
    <variation>G</variation>
    <location>
        <position position="38"/>
    </location>
</feature>
<sequence>MGSLPEQFVFRSRLPDIAIPDHLPLHDYVFERLADRRDRACLIDGATGETLSFGDVDALSRRVAAGLSSIGVCHGSTVMLLLPNSVEFAVAFLASSRLGAVTTTANPLHTPPEIAKQVAASGATVVVTEPAFVAKVSGLAGVTVVATGGGAERCASFAGLAAADGSALPEVAIDVANDAVALPYSSGTTGLPKGVMLSHRGLVTSVAQLVDGENPNLHLREDDVVLCVLPMFHVYSLHSILLCGMRAGAAIVVMKRFDTVKMLQLVERHGVTIAPLVPPIVVEMAKSDALDRHDLSSIRMVISGAAPMGKELQDIVHAKLPNAVLGQGYGMTEAGPVLSMCMAFAKEPTPVKSGACGTVVRNAELKIVDPDTGLSLPRNQPGEICIRGKQIMKGYLNNPEATEKTIDKDGWLHTGDIGFVDDDDEIFIVDRLKELIKYKGFQVAPAELEAMLIAHAAVADAAVVPMKDDSCGEIPVAFVVARDGSGITDDEIKQYVAKQVVFYKRLHKIFFVDAIPKAPSGKILRKDLRAKLAAGIPAC</sequence>
<reference key="1">
    <citation type="journal article" date="2005" name="Nature">
        <title>The map-based sequence of the rice genome.</title>
        <authorList>
            <consortium name="International rice genome sequencing project (IRGSP)"/>
        </authorList>
    </citation>
    <scope>NUCLEOTIDE SEQUENCE [LARGE SCALE GENOMIC DNA]</scope>
    <source>
        <strain>cv. Nipponbare</strain>
    </source>
</reference>
<reference key="2">
    <citation type="journal article" date="2008" name="Nucleic Acids Res.">
        <title>The rice annotation project database (RAP-DB): 2008 update.</title>
        <authorList>
            <consortium name="The rice annotation project (RAP)"/>
        </authorList>
    </citation>
    <scope>GENOME REANNOTATION</scope>
    <source>
        <strain>cv. Nipponbare</strain>
    </source>
</reference>
<reference key="3">
    <citation type="journal article" date="2013" name="Rice">
        <title>Improvement of the Oryza sativa Nipponbare reference genome using next generation sequence and optical map data.</title>
        <authorList>
            <person name="Kawahara Y."/>
            <person name="de la Bastide M."/>
            <person name="Hamilton J.P."/>
            <person name="Kanamori H."/>
            <person name="McCombie W.R."/>
            <person name="Ouyang S."/>
            <person name="Schwartz D.C."/>
            <person name="Tanaka T."/>
            <person name="Wu J."/>
            <person name="Zhou S."/>
            <person name="Childs K.L."/>
            <person name="Davidson R.M."/>
            <person name="Lin H."/>
            <person name="Quesada-Ocampo L."/>
            <person name="Vaillancourt B."/>
            <person name="Sakai H."/>
            <person name="Lee S.S."/>
            <person name="Kim J."/>
            <person name="Numa H."/>
            <person name="Itoh T."/>
            <person name="Buell C.R."/>
            <person name="Matsumoto T."/>
        </authorList>
    </citation>
    <scope>GENOME REANNOTATION</scope>
    <source>
        <strain>cv. Nipponbare</strain>
    </source>
</reference>
<reference key="4">
    <citation type="journal article" date="2005" name="PLoS Biol.">
        <title>The genomes of Oryza sativa: a history of duplications.</title>
        <authorList>
            <person name="Yu J."/>
            <person name="Wang J."/>
            <person name="Lin W."/>
            <person name="Li S."/>
            <person name="Li H."/>
            <person name="Zhou J."/>
            <person name="Ni P."/>
            <person name="Dong W."/>
            <person name="Hu S."/>
            <person name="Zeng C."/>
            <person name="Zhang J."/>
            <person name="Zhang Y."/>
            <person name="Li R."/>
            <person name="Xu Z."/>
            <person name="Li S."/>
            <person name="Li X."/>
            <person name="Zheng H."/>
            <person name="Cong L."/>
            <person name="Lin L."/>
            <person name="Yin J."/>
            <person name="Geng J."/>
            <person name="Li G."/>
            <person name="Shi J."/>
            <person name="Liu J."/>
            <person name="Lv H."/>
            <person name="Li J."/>
            <person name="Wang J."/>
            <person name="Deng Y."/>
            <person name="Ran L."/>
            <person name="Shi X."/>
            <person name="Wang X."/>
            <person name="Wu Q."/>
            <person name="Li C."/>
            <person name="Ren X."/>
            <person name="Wang J."/>
            <person name="Wang X."/>
            <person name="Li D."/>
            <person name="Liu D."/>
            <person name="Zhang X."/>
            <person name="Ji Z."/>
            <person name="Zhao W."/>
            <person name="Sun Y."/>
            <person name="Zhang Z."/>
            <person name="Bao J."/>
            <person name="Han Y."/>
            <person name="Dong L."/>
            <person name="Ji J."/>
            <person name="Chen P."/>
            <person name="Wu S."/>
            <person name="Liu J."/>
            <person name="Xiao Y."/>
            <person name="Bu D."/>
            <person name="Tan J."/>
            <person name="Yang L."/>
            <person name="Ye C."/>
            <person name="Zhang J."/>
            <person name="Xu J."/>
            <person name="Zhou Y."/>
            <person name="Yu Y."/>
            <person name="Zhang B."/>
            <person name="Zhuang S."/>
            <person name="Wei H."/>
            <person name="Liu B."/>
            <person name="Lei M."/>
            <person name="Yu H."/>
            <person name="Li Y."/>
            <person name="Xu H."/>
            <person name="Wei S."/>
            <person name="He X."/>
            <person name="Fang L."/>
            <person name="Zhang Z."/>
            <person name="Zhang Y."/>
            <person name="Huang X."/>
            <person name="Su Z."/>
            <person name="Tong W."/>
            <person name="Li J."/>
            <person name="Tong Z."/>
            <person name="Li S."/>
            <person name="Ye J."/>
            <person name="Wang L."/>
            <person name="Fang L."/>
            <person name="Lei T."/>
            <person name="Chen C.-S."/>
            <person name="Chen H.-C."/>
            <person name="Xu Z."/>
            <person name="Li H."/>
            <person name="Huang H."/>
            <person name="Zhang F."/>
            <person name="Xu H."/>
            <person name="Li N."/>
            <person name="Zhao C."/>
            <person name="Li S."/>
            <person name="Dong L."/>
            <person name="Huang Y."/>
            <person name="Li L."/>
            <person name="Xi Y."/>
            <person name="Qi Q."/>
            <person name="Li W."/>
            <person name="Zhang B."/>
            <person name="Hu W."/>
            <person name="Zhang Y."/>
            <person name="Tian X."/>
            <person name="Jiao Y."/>
            <person name="Liang X."/>
            <person name="Jin J."/>
            <person name="Gao L."/>
            <person name="Zheng W."/>
            <person name="Hao B."/>
            <person name="Liu S.-M."/>
            <person name="Wang W."/>
            <person name="Yuan L."/>
            <person name="Cao M."/>
            <person name="McDermott J."/>
            <person name="Samudrala R."/>
            <person name="Wang J."/>
            <person name="Wong G.K.-S."/>
            <person name="Yang H."/>
        </authorList>
    </citation>
    <scope>NUCLEOTIDE SEQUENCE [LARGE SCALE GENOMIC DNA]</scope>
    <source>
        <strain>cv. Nipponbare</strain>
    </source>
</reference>
<reference key="5">
    <citation type="journal article" date="2003" name="Science">
        <title>Collection, mapping, and annotation of over 28,000 cDNA clones from japonica rice.</title>
        <authorList>
            <consortium name="The rice full-length cDNA consortium"/>
        </authorList>
    </citation>
    <scope>NUCLEOTIDE SEQUENCE [LARGE SCALE MRNA]</scope>
    <source>
        <strain>cv. Nipponbare</strain>
    </source>
</reference>
<reference key="6">
    <citation type="journal article" date="2008" name="New Phytol.">
        <title>Genome-wide analysis of a land plant-specific acyl:coenzyme A synthetase (ACS) gene family in Arabidopsis, poplar, rice and Physcomitrella.</title>
        <authorList>
            <person name="de Azevedo Souza C."/>
            <person name="Barbazuk B."/>
            <person name="Ralph S.G."/>
            <person name="Bohlmann J."/>
            <person name="Hamberger B."/>
            <person name="Douglas C.J."/>
        </authorList>
    </citation>
    <scope>GENE FAMILY</scope>
</reference>
<reference key="7">
    <citation type="journal article" date="2011" name="Plant Physiol.">
        <title>Functional characterization of evolutionarily divergent 4-coumarate:coenzyme a ligases in rice.</title>
        <authorList>
            <person name="Gui J."/>
            <person name="Shen J."/>
            <person name="Li L."/>
        </authorList>
    </citation>
    <scope>FUNCTION</scope>
    <scope>CATALYTIC ACTIVITY</scope>
    <scope>BIOPHYSICOCHEMICAL PROPERTIES</scope>
    <scope>TISSUE SPECIFICITY</scope>
</reference>
<reference key="8">
    <citation type="journal article" date="2013" name="Biochem. Biophys. Res. Commun.">
        <title>Analysis of five rice 4-coumarate:coenzyme A ligase enzyme activity and stress response for potential roles in lignin and flavonoid biosynthesis in rice.</title>
        <authorList>
            <person name="Sun H."/>
            <person name="Li Y."/>
            <person name="Feng S."/>
            <person name="Zou W."/>
            <person name="Guo K."/>
            <person name="Fan C."/>
            <person name="Si S."/>
            <person name="Peng L."/>
        </authorList>
    </citation>
    <scope>FUNCTION</scope>
    <scope>CATALYTIC ACTIVITY</scope>
    <scope>INDUCTION</scope>
</reference>
<reference key="9">
    <citation type="journal article" date="2013" name="Gene">
        <title>Transcriptome profile reveals heat response mechanism at molecular and metabolic levels in rice flag leaf.</title>
        <authorList>
            <person name="Zhang X."/>
            <person name="Rerksiri W."/>
            <person name="Liu A."/>
            <person name="Zhou X."/>
            <person name="Xiong H."/>
            <person name="Xiang J."/>
            <person name="Chen X."/>
            <person name="Xiong X."/>
        </authorList>
    </citation>
    <scope>INDUCTION BY HEAT STRESS</scope>
</reference>
<organism>
    <name type="scientific">Oryza sativa subsp. japonica</name>
    <name type="common">Rice</name>
    <dbReference type="NCBI Taxonomy" id="39947"/>
    <lineage>
        <taxon>Eukaryota</taxon>
        <taxon>Viridiplantae</taxon>
        <taxon>Streptophyta</taxon>
        <taxon>Embryophyta</taxon>
        <taxon>Tracheophyta</taxon>
        <taxon>Spermatophyta</taxon>
        <taxon>Magnoliopsida</taxon>
        <taxon>Liliopsida</taxon>
        <taxon>Poales</taxon>
        <taxon>Poaceae</taxon>
        <taxon>BOP clade</taxon>
        <taxon>Oryzoideae</taxon>
        <taxon>Oryzeae</taxon>
        <taxon>Oryzinae</taxon>
        <taxon>Oryza</taxon>
        <taxon>Oryza sativa</taxon>
    </lineage>
</organism>
<protein>
    <recommendedName>
        <fullName evidence="6">4-coumarate--CoA ligase 5</fullName>
        <shortName evidence="6">4CL 5</shortName>
        <shortName evidence="6">Os4CL5</shortName>
        <ecNumber evidence="3 4">6.2.1.12</ecNumber>
    </recommendedName>
    <alternativeName>
        <fullName evidence="7">(E)-ferulate--CoA ligase</fullName>
        <ecNumber evidence="3 4">6.2.1.34</ecNumber>
    </alternativeName>
    <alternativeName>
        <fullName evidence="7">4-coumaroyl-CoA synthase 5</fullName>
    </alternativeName>
</protein>
<comment type="function">
    <text evidence="1 3 4">Involved in the phenylpropanoid metabolism by mediating the activation of a number of hydroxycinnamates for the biosynthesis of monolignols and other phenolic secondary metabolites (PubMed:21807887, PubMed:23246835). Catalyzes the formation of CoA esters of cinnamate, 4-coumarate, caffeate and ferulate (PubMed:21807887, PubMed:23246835). Is also able to convert sinapate to its corresponding CoA ester, a reaction that is rarely observed in 4CL catalysis (PubMed:21807887). Is more efficient with substrates in the following order: ferulate &gt; 4-coumarate &gt; sinapate &gt; caffeate &gt; cinnamate (PubMed:21807887). Follows a two-step reaction mechanism, wherein the carboxylate substrate first undergoes adenylation by ATP, followed by a thioesterification in the presence of CoA to yield the final CoA thioesters (By similarity).</text>
</comment>
<comment type="catalytic activity">
    <reaction evidence="3 4">
        <text>(E)-ferulate + ATP + CoA = (E)-feruloyl-CoA + AMP + diphosphate</text>
        <dbReference type="Rhea" id="RHEA:36251"/>
        <dbReference type="ChEBI" id="CHEBI:29749"/>
        <dbReference type="ChEBI" id="CHEBI:30616"/>
        <dbReference type="ChEBI" id="CHEBI:33019"/>
        <dbReference type="ChEBI" id="CHEBI:57287"/>
        <dbReference type="ChEBI" id="CHEBI:87305"/>
        <dbReference type="ChEBI" id="CHEBI:456215"/>
        <dbReference type="EC" id="6.2.1.34"/>
    </reaction>
    <physiologicalReaction direction="left-to-right" evidence="3 4">
        <dbReference type="Rhea" id="RHEA:36252"/>
    </physiologicalReaction>
</comment>
<comment type="catalytic activity">
    <reaction evidence="3 4">
        <text>(E)-4-coumarate + ATP + CoA = (E)-4-coumaroyl-CoA + AMP + diphosphate</text>
        <dbReference type="Rhea" id="RHEA:19641"/>
        <dbReference type="ChEBI" id="CHEBI:12876"/>
        <dbReference type="ChEBI" id="CHEBI:30616"/>
        <dbReference type="ChEBI" id="CHEBI:33019"/>
        <dbReference type="ChEBI" id="CHEBI:57287"/>
        <dbReference type="ChEBI" id="CHEBI:85008"/>
        <dbReference type="ChEBI" id="CHEBI:456215"/>
        <dbReference type="EC" id="6.2.1.12"/>
    </reaction>
    <physiologicalReaction direction="left-to-right" evidence="3 4">
        <dbReference type="Rhea" id="RHEA:19642"/>
    </physiologicalReaction>
</comment>
<comment type="catalytic activity">
    <reaction evidence="3">
        <text>(E)-sinapate + ATP + CoA = (E)-sinapoyl-CoA + AMP + diphosphate</text>
        <dbReference type="Rhea" id="RHEA:72587"/>
        <dbReference type="ChEBI" id="CHEBI:30023"/>
        <dbReference type="ChEBI" id="CHEBI:30616"/>
        <dbReference type="ChEBI" id="CHEBI:33019"/>
        <dbReference type="ChEBI" id="CHEBI:57287"/>
        <dbReference type="ChEBI" id="CHEBI:57393"/>
        <dbReference type="ChEBI" id="CHEBI:456215"/>
    </reaction>
    <physiologicalReaction direction="left-to-right" evidence="3">
        <dbReference type="Rhea" id="RHEA:72588"/>
    </physiologicalReaction>
</comment>
<comment type="catalytic activity">
    <reaction evidence="3 4">
        <text>(E)-caffeate + ATP + CoA = (E)-caffeoyl-CoA + AMP + diphosphate</text>
        <dbReference type="Rhea" id="RHEA:36299"/>
        <dbReference type="ChEBI" id="CHEBI:30616"/>
        <dbReference type="ChEBI" id="CHEBI:33019"/>
        <dbReference type="ChEBI" id="CHEBI:57287"/>
        <dbReference type="ChEBI" id="CHEBI:57770"/>
        <dbReference type="ChEBI" id="CHEBI:87136"/>
        <dbReference type="ChEBI" id="CHEBI:456215"/>
    </reaction>
    <physiologicalReaction direction="left-to-right" evidence="3 4">
        <dbReference type="Rhea" id="RHEA:36300"/>
    </physiologicalReaction>
</comment>
<comment type="catalytic activity">
    <reaction evidence="3 4">
        <text>(E)-cinnamate + ATP + CoA = (E)-cinnamoyl-CoA + AMP + diphosphate</text>
        <dbReference type="Rhea" id="RHEA:64788"/>
        <dbReference type="ChEBI" id="CHEBI:15669"/>
        <dbReference type="ChEBI" id="CHEBI:30616"/>
        <dbReference type="ChEBI" id="CHEBI:33019"/>
        <dbReference type="ChEBI" id="CHEBI:57252"/>
        <dbReference type="ChEBI" id="CHEBI:57287"/>
        <dbReference type="ChEBI" id="CHEBI:456215"/>
    </reaction>
    <physiologicalReaction direction="left-to-right" evidence="3 4">
        <dbReference type="Rhea" id="RHEA:64789"/>
    </physiologicalReaction>
</comment>
<comment type="catalytic activity">
    <reaction evidence="8 9">
        <text>(E)-ferulate + ATP + H(+) = (E)-feruloyl-AMP + diphosphate</text>
        <dbReference type="Rhea" id="RHEA:72439"/>
        <dbReference type="ChEBI" id="CHEBI:15378"/>
        <dbReference type="ChEBI" id="CHEBI:29749"/>
        <dbReference type="ChEBI" id="CHEBI:30616"/>
        <dbReference type="ChEBI" id="CHEBI:33019"/>
        <dbReference type="ChEBI" id="CHEBI:192350"/>
    </reaction>
    <physiologicalReaction direction="left-to-right" evidence="3 4">
        <dbReference type="Rhea" id="RHEA:72440"/>
    </physiologicalReaction>
</comment>
<comment type="catalytic activity">
    <reaction evidence="8 9">
        <text>(E)-feruloyl-AMP + CoA = (E)-feruloyl-CoA + AMP + H(+)</text>
        <dbReference type="Rhea" id="RHEA:72443"/>
        <dbReference type="ChEBI" id="CHEBI:15378"/>
        <dbReference type="ChEBI" id="CHEBI:57287"/>
        <dbReference type="ChEBI" id="CHEBI:87305"/>
        <dbReference type="ChEBI" id="CHEBI:192350"/>
        <dbReference type="ChEBI" id="CHEBI:456215"/>
    </reaction>
    <physiologicalReaction direction="left-to-right" evidence="3 4">
        <dbReference type="Rhea" id="RHEA:72444"/>
    </physiologicalReaction>
</comment>
<comment type="catalytic activity">
    <reaction evidence="8 9">
        <text>(E)-4-coumarate + ATP + H(+) = (E)-4-coumaroyl-AMP + diphosphate</text>
        <dbReference type="Rhea" id="RHEA:72419"/>
        <dbReference type="ChEBI" id="CHEBI:12876"/>
        <dbReference type="ChEBI" id="CHEBI:15378"/>
        <dbReference type="ChEBI" id="CHEBI:30616"/>
        <dbReference type="ChEBI" id="CHEBI:33019"/>
        <dbReference type="ChEBI" id="CHEBI:192348"/>
    </reaction>
    <physiologicalReaction direction="left-to-right" evidence="8 9">
        <dbReference type="Rhea" id="RHEA:72420"/>
    </physiologicalReaction>
</comment>
<comment type="catalytic activity">
    <reaction evidence="8 9">
        <text>(E)-4-coumaroyl-AMP + CoA = (E)-4-coumaroyl-CoA + AMP + H(+)</text>
        <dbReference type="Rhea" id="RHEA:72423"/>
        <dbReference type="ChEBI" id="CHEBI:15378"/>
        <dbReference type="ChEBI" id="CHEBI:57287"/>
        <dbReference type="ChEBI" id="CHEBI:85008"/>
        <dbReference type="ChEBI" id="CHEBI:192348"/>
        <dbReference type="ChEBI" id="CHEBI:456215"/>
    </reaction>
    <physiologicalReaction direction="left-to-right" evidence="8 9">
        <dbReference type="Rhea" id="RHEA:72424"/>
    </physiologicalReaction>
</comment>
<comment type="catalytic activity">
    <reaction evidence="8">
        <text>(E)-sinapate + ATP + H(+) = (E)-sinapoyl-AMP + diphosphate</text>
        <dbReference type="Rhea" id="RHEA:72603"/>
        <dbReference type="ChEBI" id="CHEBI:15378"/>
        <dbReference type="ChEBI" id="CHEBI:30023"/>
        <dbReference type="ChEBI" id="CHEBI:30616"/>
        <dbReference type="ChEBI" id="CHEBI:33019"/>
        <dbReference type="ChEBI" id="CHEBI:192469"/>
    </reaction>
    <physiologicalReaction direction="left-to-right" evidence="8">
        <dbReference type="Rhea" id="RHEA:72604"/>
    </physiologicalReaction>
</comment>
<comment type="catalytic activity">
    <reaction evidence="8">
        <text>(E)-sinapoyl-AMP + CoA = (E)-sinapoyl-CoA + AMP + H(+)</text>
        <dbReference type="Rhea" id="RHEA:72607"/>
        <dbReference type="ChEBI" id="CHEBI:15378"/>
        <dbReference type="ChEBI" id="CHEBI:57287"/>
        <dbReference type="ChEBI" id="CHEBI:57393"/>
        <dbReference type="ChEBI" id="CHEBI:192469"/>
        <dbReference type="ChEBI" id="CHEBI:456215"/>
    </reaction>
    <physiologicalReaction direction="left-to-right" evidence="8">
        <dbReference type="Rhea" id="RHEA:72608"/>
    </physiologicalReaction>
</comment>
<comment type="catalytic activity">
    <reaction evidence="8 9">
        <text>(E)-caffeate + ATP + H(+) = (E)-caffeoyl-AMP + diphosphate</text>
        <dbReference type="Rhea" id="RHEA:72431"/>
        <dbReference type="ChEBI" id="CHEBI:15378"/>
        <dbReference type="ChEBI" id="CHEBI:30616"/>
        <dbReference type="ChEBI" id="CHEBI:33019"/>
        <dbReference type="ChEBI" id="CHEBI:57770"/>
        <dbReference type="ChEBI" id="CHEBI:192349"/>
    </reaction>
    <physiologicalReaction direction="left-to-right" evidence="8 9">
        <dbReference type="Rhea" id="RHEA:72432"/>
    </physiologicalReaction>
</comment>
<comment type="catalytic activity">
    <reaction evidence="8 9">
        <text>(E)-caffeoyl-AMP + CoA = (E)-caffeoyl-CoA + AMP + H(+)</text>
        <dbReference type="Rhea" id="RHEA:72435"/>
        <dbReference type="ChEBI" id="CHEBI:15378"/>
        <dbReference type="ChEBI" id="CHEBI:57287"/>
        <dbReference type="ChEBI" id="CHEBI:87136"/>
        <dbReference type="ChEBI" id="CHEBI:192349"/>
        <dbReference type="ChEBI" id="CHEBI:456215"/>
    </reaction>
    <physiologicalReaction direction="left-to-right" evidence="8 9">
        <dbReference type="Rhea" id="RHEA:72436"/>
    </physiologicalReaction>
</comment>
<comment type="cofactor">
    <cofactor evidence="1">
        <name>Mg(2+)</name>
        <dbReference type="ChEBI" id="CHEBI:18420"/>
    </cofactor>
</comment>
<comment type="biophysicochemical properties">
    <kinetics>
        <KM evidence="3">54.4 uM for cinnamate</KM>
        <KM evidence="3">10.3 uM for 4-coumarate</KM>
        <KM evidence="3">26.1 uM for caffeate</KM>
        <KM evidence="3">6.9 uM for ferulate</KM>
        <KM evidence="3">58.9 uM for sinapate</KM>
        <Vmax evidence="3">300.0 pmol/sec/mg enzyme with cinnamate as substrate</Vmax>
        <Vmax evidence="3">830.0 pmol/sec/mg enzyme with 4-coumarate as substrate</Vmax>
        <Vmax evidence="3">240.0 pmol/sec/mg enzyme with caffeate as substrate</Vmax>
        <Vmax evidence="3">590.0 pmol/sec/mg enzyme with ferulate as substrate</Vmax>
        <Vmax evidence="3">920.0 pmol/sec/mg enzyme with sinapate as substrate</Vmax>
        <text evidence="3">kcat is 1.02 min(-1) with cinnamate as substrate (PubMed:21807887). kcat is 2.88 min(-1) with 4-coumarate as substrate (PubMed:21807887). kcat is 0.84 min(-1) with caffeate as substrate (PubMed:21807887). kcat is 2.04 min(-1) with ferulate as substrate (PubMed:21807887). kcat is 3.18 min(-1) with sinapate as substrate (PubMed:21807887).</text>
    </kinetics>
</comment>
<comment type="pathway">
    <text evidence="7">Phytoalexin biosynthesis; 3,4',5-trihydroxystilbene biosynthesis; 3,4',5-trihydroxystilbene from trans-4-coumarate: step 1/2.</text>
</comment>
<comment type="tissue specificity">
    <text evidence="3">Expressed in roots, stems, leaf blades, leaf sheaths and spikelets.</text>
</comment>
<comment type="induction">
    <text evidence="4 5">Induced by heat stress (PubMed:23994682). Induced by wounding (PubMed:23246835). Down-regulated by UV irradiation (PubMed:23246835).</text>
</comment>
<comment type="domain">
    <text evidence="2">Both substrate-binding domains (SBD1 and SBD2) are involved in the substrate recognition, and are sufficient to confer the substrate specificity.</text>
</comment>
<comment type="similarity">
    <text evidence="7">Belongs to the ATP-dependent AMP-binding enzyme family.</text>
</comment>
<name>4CL5_ORYSJ</name>
<proteinExistence type="evidence at protein level"/>